<keyword id="KW-0227">DNA damage</keyword>
<keyword id="KW-0233">DNA recombination</keyword>
<keyword id="KW-0234">DNA repair</keyword>
<keyword id="KW-0479">Metal-binding</keyword>
<keyword id="KW-0862">Zinc</keyword>
<keyword id="KW-0863">Zinc-finger</keyword>
<proteinExistence type="inferred from homology"/>
<organism>
    <name type="scientific">Salmonella paratyphi C (strain RKS4594)</name>
    <dbReference type="NCBI Taxonomy" id="476213"/>
    <lineage>
        <taxon>Bacteria</taxon>
        <taxon>Pseudomonadati</taxon>
        <taxon>Pseudomonadota</taxon>
        <taxon>Gammaproteobacteria</taxon>
        <taxon>Enterobacterales</taxon>
        <taxon>Enterobacteriaceae</taxon>
        <taxon>Salmonella</taxon>
    </lineage>
</organism>
<gene>
    <name evidence="1" type="primary">recR</name>
    <name type="ordered locus">SPC_0500</name>
</gene>
<reference key="1">
    <citation type="journal article" date="2009" name="PLoS ONE">
        <title>Salmonella paratyphi C: genetic divergence from Salmonella choleraesuis and pathogenic convergence with Salmonella typhi.</title>
        <authorList>
            <person name="Liu W.-Q."/>
            <person name="Feng Y."/>
            <person name="Wang Y."/>
            <person name="Zou Q.-H."/>
            <person name="Chen F."/>
            <person name="Guo J.-T."/>
            <person name="Peng Y.-H."/>
            <person name="Jin Y."/>
            <person name="Li Y.-G."/>
            <person name="Hu S.-N."/>
            <person name="Johnston R.N."/>
            <person name="Liu G.-R."/>
            <person name="Liu S.-L."/>
        </authorList>
    </citation>
    <scope>NUCLEOTIDE SEQUENCE [LARGE SCALE GENOMIC DNA]</scope>
    <source>
        <strain>RKS4594</strain>
    </source>
</reference>
<dbReference type="EMBL" id="CP000857">
    <property type="protein sequence ID" value="ACN44680.1"/>
    <property type="molecule type" value="Genomic_DNA"/>
</dbReference>
<dbReference type="RefSeq" id="WP_001195023.1">
    <property type="nucleotide sequence ID" value="NC_012125.1"/>
</dbReference>
<dbReference type="SMR" id="C0Q810"/>
<dbReference type="KEGG" id="sei:SPC_0500"/>
<dbReference type="HOGENOM" id="CLU_060739_1_2_6"/>
<dbReference type="Proteomes" id="UP000001599">
    <property type="component" value="Chromosome"/>
</dbReference>
<dbReference type="GO" id="GO:0003677">
    <property type="term" value="F:DNA binding"/>
    <property type="evidence" value="ECO:0007669"/>
    <property type="project" value="UniProtKB-UniRule"/>
</dbReference>
<dbReference type="GO" id="GO:0008270">
    <property type="term" value="F:zinc ion binding"/>
    <property type="evidence" value="ECO:0007669"/>
    <property type="project" value="UniProtKB-KW"/>
</dbReference>
<dbReference type="GO" id="GO:0006310">
    <property type="term" value="P:DNA recombination"/>
    <property type="evidence" value="ECO:0007669"/>
    <property type="project" value="UniProtKB-UniRule"/>
</dbReference>
<dbReference type="GO" id="GO:0006281">
    <property type="term" value="P:DNA repair"/>
    <property type="evidence" value="ECO:0007669"/>
    <property type="project" value="UniProtKB-UniRule"/>
</dbReference>
<dbReference type="CDD" id="cd01025">
    <property type="entry name" value="TOPRIM_recR"/>
    <property type="match status" value="1"/>
</dbReference>
<dbReference type="FunFam" id="1.10.8.420:FF:000001">
    <property type="entry name" value="Recombination protein RecR"/>
    <property type="match status" value="1"/>
</dbReference>
<dbReference type="FunFam" id="3.40.1360.10:FF:000001">
    <property type="entry name" value="Recombination protein RecR"/>
    <property type="match status" value="1"/>
</dbReference>
<dbReference type="Gene3D" id="3.40.1360.10">
    <property type="match status" value="1"/>
</dbReference>
<dbReference type="Gene3D" id="6.10.250.240">
    <property type="match status" value="1"/>
</dbReference>
<dbReference type="Gene3D" id="1.10.8.420">
    <property type="entry name" value="RecR Domain 1"/>
    <property type="match status" value="1"/>
</dbReference>
<dbReference type="HAMAP" id="MF_00017">
    <property type="entry name" value="RecR"/>
    <property type="match status" value="1"/>
</dbReference>
<dbReference type="InterPro" id="IPR000093">
    <property type="entry name" value="DNA_Rcmb_RecR"/>
</dbReference>
<dbReference type="InterPro" id="IPR023627">
    <property type="entry name" value="Rcmb_RecR"/>
</dbReference>
<dbReference type="InterPro" id="IPR015967">
    <property type="entry name" value="Rcmb_RecR_Znf"/>
</dbReference>
<dbReference type="InterPro" id="IPR006171">
    <property type="entry name" value="TOPRIM_dom"/>
</dbReference>
<dbReference type="InterPro" id="IPR034137">
    <property type="entry name" value="TOPRIM_RecR"/>
</dbReference>
<dbReference type="NCBIfam" id="TIGR00615">
    <property type="entry name" value="recR"/>
    <property type="match status" value="1"/>
</dbReference>
<dbReference type="PANTHER" id="PTHR30446">
    <property type="entry name" value="RECOMBINATION PROTEIN RECR"/>
    <property type="match status" value="1"/>
</dbReference>
<dbReference type="PANTHER" id="PTHR30446:SF0">
    <property type="entry name" value="RECOMBINATION PROTEIN RECR"/>
    <property type="match status" value="1"/>
</dbReference>
<dbReference type="Pfam" id="PF21175">
    <property type="entry name" value="RecR_C"/>
    <property type="match status" value="1"/>
</dbReference>
<dbReference type="Pfam" id="PF21176">
    <property type="entry name" value="RecR_HhH"/>
    <property type="match status" value="1"/>
</dbReference>
<dbReference type="Pfam" id="PF02132">
    <property type="entry name" value="RecR_ZnF"/>
    <property type="match status" value="1"/>
</dbReference>
<dbReference type="Pfam" id="PF13662">
    <property type="entry name" value="Toprim_4"/>
    <property type="match status" value="1"/>
</dbReference>
<dbReference type="SMART" id="SM00493">
    <property type="entry name" value="TOPRIM"/>
    <property type="match status" value="1"/>
</dbReference>
<dbReference type="SUPFAM" id="SSF111304">
    <property type="entry name" value="Recombination protein RecR"/>
    <property type="match status" value="1"/>
</dbReference>
<dbReference type="PROSITE" id="PS01300">
    <property type="entry name" value="RECR"/>
    <property type="match status" value="1"/>
</dbReference>
<dbReference type="PROSITE" id="PS50880">
    <property type="entry name" value="TOPRIM"/>
    <property type="match status" value="1"/>
</dbReference>
<sequence length="201" mass="21715">MQTSPLLTQLMEALRCLPGVGPKSAQRMAFTLLQRDRSGGMRLAQALTRAMSEIGHCADCRTFTEQDVCNICSNPRRQENGQICVVESPADIYAIEQTGQFSGRYFVLMGHLSPLDGIGPDDIGLDRLEQRLASEKISELILATNPTVEGEATANYIAELCAEAGVEASRIAHGVPVGGELEMVDGTTLSHSLAGRHKIIF</sequence>
<accession>C0Q810</accession>
<name>RECR_SALPC</name>
<evidence type="ECO:0000255" key="1">
    <source>
        <dbReference type="HAMAP-Rule" id="MF_00017"/>
    </source>
</evidence>
<protein>
    <recommendedName>
        <fullName evidence="1">Recombination protein RecR</fullName>
    </recommendedName>
</protein>
<comment type="function">
    <text evidence="1">May play a role in DNA repair. It seems to be involved in an RecBC-independent recombinational process of DNA repair. It may act with RecF and RecO.</text>
</comment>
<comment type="similarity">
    <text evidence="1">Belongs to the RecR family.</text>
</comment>
<feature type="chain" id="PRO_1000195406" description="Recombination protein RecR">
    <location>
        <begin position="1"/>
        <end position="201"/>
    </location>
</feature>
<feature type="domain" description="Toprim" evidence="1">
    <location>
        <begin position="81"/>
        <end position="176"/>
    </location>
</feature>
<feature type="zinc finger region" description="C4-type" evidence="1">
    <location>
        <begin position="57"/>
        <end position="72"/>
    </location>
</feature>